<keyword id="KW-0002">3D-structure</keyword>
<keyword id="KW-0150">Chloroplast</keyword>
<keyword id="KW-0472">Membrane</keyword>
<keyword id="KW-0602">Photosynthesis</keyword>
<keyword id="KW-0604">Photosystem II</keyword>
<keyword id="KW-0934">Plastid</keyword>
<keyword id="KW-0674">Reaction center</keyword>
<keyword id="KW-0793">Thylakoid</keyword>
<keyword id="KW-0812">Transmembrane</keyword>
<keyword id="KW-1133">Transmembrane helix</keyword>
<organism>
    <name type="scientific">Thalassiosira pseudonana</name>
    <name type="common">Marine diatom</name>
    <name type="synonym">Cyclotella nana</name>
    <dbReference type="NCBI Taxonomy" id="35128"/>
    <lineage>
        <taxon>Eukaryota</taxon>
        <taxon>Sar</taxon>
        <taxon>Stramenopiles</taxon>
        <taxon>Ochrophyta</taxon>
        <taxon>Bacillariophyta</taxon>
        <taxon>Coscinodiscophyceae</taxon>
        <taxon>Thalassiosirophycidae</taxon>
        <taxon>Thalassiosirales</taxon>
        <taxon>Thalassiosiraceae</taxon>
        <taxon>Thalassiosira</taxon>
    </lineage>
</organism>
<protein>
    <recommendedName>
        <fullName evidence="1">Photosystem II reaction center protein I</fullName>
        <shortName evidence="1">PSII-I</shortName>
    </recommendedName>
    <alternativeName>
        <fullName evidence="1">PSII 4.8 kDa protein</fullName>
    </alternativeName>
</protein>
<gene>
    <name evidence="1" type="primary">psbI</name>
</gene>
<geneLocation type="chloroplast"/>
<feature type="chain" id="PRO_0000275819" description="Photosystem II reaction center protein I">
    <location>
        <begin position="1"/>
        <end position="38"/>
    </location>
</feature>
<feature type="transmembrane region" description="Helical" evidence="1">
    <location>
        <begin position="6"/>
        <end position="26"/>
    </location>
</feature>
<feature type="helix" evidence="2">
    <location>
        <begin position="2"/>
        <end position="23"/>
    </location>
</feature>
<feature type="turn" evidence="2">
    <location>
        <begin position="24"/>
        <end position="26"/>
    </location>
</feature>
<feature type="helix" evidence="2">
    <location>
        <begin position="27"/>
        <end position="29"/>
    </location>
</feature>
<reference key="1">
    <citation type="journal article" date="2007" name="Mol. Genet. Genomics">
        <title>Chloroplast genomes of the diatoms Phaeodactylum tricornutum and Thalassiosira pseudonana: comparison with other plastid genomes of the red lineage.</title>
        <authorList>
            <person name="Oudot-Le Secq M.-P."/>
            <person name="Grimwood J."/>
            <person name="Shapiro H."/>
            <person name="Armbrust E.V."/>
            <person name="Bowler C."/>
            <person name="Green B.R."/>
        </authorList>
    </citation>
    <scope>NUCLEOTIDE SEQUENCE [LARGE SCALE GENOMIC DNA]</scope>
    <source>
        <strain>CCMP1335 / NEPCC58 / CCAP 1085/12</strain>
    </source>
</reference>
<comment type="function">
    <text evidence="1">One of the components of the core complex of photosystem II (PSII), required for its stability and/or assembly. PSII is a light-driven water:plastoquinone oxidoreductase that uses light energy to abstract electrons from H(2)O, generating O(2) and a proton gradient subsequently used for ATP formation. It consists of a core antenna complex that captures photons, and an electron transfer chain that converts photonic excitation into a charge separation.</text>
</comment>
<comment type="subunit">
    <text evidence="1">PSII is composed of 1 copy each of membrane proteins PsbA, PsbB, PsbC, PsbD, PsbE, PsbF, PsbH, PsbI, PsbJ, PsbK, PsbL, PsbM, PsbT, PsbX, PsbY, PsbZ, Psb30/Ycf12, at least 3 peripheral proteins of the oxygen-evolving complex and a large number of cofactors. It forms dimeric complexes.</text>
</comment>
<comment type="subcellular location">
    <subcellularLocation>
        <location evidence="1">Plastid</location>
        <location evidence="1">Chloroplast thylakoid membrane</location>
        <topology evidence="1">Single-pass membrane protein</topology>
    </subcellularLocation>
</comment>
<comment type="similarity">
    <text evidence="1">Belongs to the PsbI family.</text>
</comment>
<accession>A0T0U9</accession>
<name>PSBI_THAPS</name>
<proteinExistence type="evidence at protein level"/>
<evidence type="ECO:0000255" key="1">
    <source>
        <dbReference type="HAMAP-Rule" id="MF_01316"/>
    </source>
</evidence>
<evidence type="ECO:0007829" key="2">
    <source>
        <dbReference type="PDB" id="8IWH"/>
    </source>
</evidence>
<dbReference type="EMBL" id="EF067921">
    <property type="protein sequence ID" value="ABK20784.1"/>
    <property type="molecule type" value="Genomic_DNA"/>
</dbReference>
<dbReference type="RefSeq" id="YP_874561.1">
    <property type="nucleotide sequence ID" value="NC_008589.1"/>
</dbReference>
<dbReference type="PDB" id="8IWH">
    <property type="method" value="EM"/>
    <property type="resolution" value="2.68 A"/>
    <property type="chains" value="I/i=1-34"/>
</dbReference>
<dbReference type="PDBsum" id="8IWH"/>
<dbReference type="EMDB" id="EMD-35766"/>
<dbReference type="SMR" id="A0T0U9"/>
<dbReference type="STRING" id="35128.A0T0U9"/>
<dbReference type="GeneID" id="4524871"/>
<dbReference type="InParanoid" id="A0T0U9"/>
<dbReference type="GO" id="GO:0009535">
    <property type="term" value="C:chloroplast thylakoid membrane"/>
    <property type="evidence" value="ECO:0007669"/>
    <property type="project" value="UniProtKB-SubCell"/>
</dbReference>
<dbReference type="GO" id="GO:0009539">
    <property type="term" value="C:photosystem II reaction center"/>
    <property type="evidence" value="ECO:0007669"/>
    <property type="project" value="InterPro"/>
</dbReference>
<dbReference type="GO" id="GO:0015979">
    <property type="term" value="P:photosynthesis"/>
    <property type="evidence" value="ECO:0007669"/>
    <property type="project" value="UniProtKB-UniRule"/>
</dbReference>
<dbReference type="HAMAP" id="MF_01316">
    <property type="entry name" value="PSII_PsbI"/>
    <property type="match status" value="1"/>
</dbReference>
<dbReference type="InterPro" id="IPR003686">
    <property type="entry name" value="PSII_PsbI"/>
</dbReference>
<dbReference type="InterPro" id="IPR037271">
    <property type="entry name" value="PSII_PsbI_sf"/>
</dbReference>
<dbReference type="NCBIfam" id="NF002735">
    <property type="entry name" value="PRK02655.1"/>
    <property type="match status" value="1"/>
</dbReference>
<dbReference type="PANTHER" id="PTHR35772">
    <property type="entry name" value="PHOTOSYSTEM II REACTION CENTER PROTEIN I"/>
    <property type="match status" value="1"/>
</dbReference>
<dbReference type="PANTHER" id="PTHR35772:SF1">
    <property type="entry name" value="PHOTOSYSTEM II REACTION CENTER PROTEIN I"/>
    <property type="match status" value="1"/>
</dbReference>
<dbReference type="Pfam" id="PF02532">
    <property type="entry name" value="PsbI"/>
    <property type="match status" value="1"/>
</dbReference>
<dbReference type="SUPFAM" id="SSF161041">
    <property type="entry name" value="Photosystem II reaction center protein I, PsbI"/>
    <property type="match status" value="1"/>
</dbReference>
<sequence>MLTLKILVYTTVIFFVSLFIFGFLSSDPSRNPNRRDLE</sequence>